<dbReference type="EC" id="2.3.1.-" evidence="10"/>
<dbReference type="EMBL" id="GL698613">
    <property type="protein sequence ID" value="EFY84645.1"/>
    <property type="molecule type" value="Genomic_DNA"/>
</dbReference>
<dbReference type="RefSeq" id="XP_007815650.1">
    <property type="nucleotide sequence ID" value="XM_007817459.1"/>
</dbReference>
<dbReference type="SMR" id="E9EHG2"/>
<dbReference type="STRING" id="655827.E9EHG2"/>
<dbReference type="ESTHER" id="metaq-pks2">
    <property type="family name" value="Thioesterase"/>
</dbReference>
<dbReference type="eggNOG" id="KOG1202">
    <property type="taxonomic scope" value="Eukaryota"/>
</dbReference>
<dbReference type="HOGENOM" id="CLU_000022_6_0_1"/>
<dbReference type="InParanoid" id="E9EHG2"/>
<dbReference type="OMA" id="FRATMQH"/>
<dbReference type="OrthoDB" id="329835at2759"/>
<dbReference type="Proteomes" id="UP000002499">
    <property type="component" value="Unassembled WGS sequence"/>
</dbReference>
<dbReference type="GO" id="GO:0004315">
    <property type="term" value="F:3-oxoacyl-[acyl-carrier-protein] synthase activity"/>
    <property type="evidence" value="ECO:0007669"/>
    <property type="project" value="InterPro"/>
</dbReference>
<dbReference type="GO" id="GO:0004312">
    <property type="term" value="F:fatty acid synthase activity"/>
    <property type="evidence" value="ECO:0007669"/>
    <property type="project" value="TreeGrafter"/>
</dbReference>
<dbReference type="GO" id="GO:0031177">
    <property type="term" value="F:phosphopantetheine binding"/>
    <property type="evidence" value="ECO:0007669"/>
    <property type="project" value="InterPro"/>
</dbReference>
<dbReference type="GO" id="GO:0006633">
    <property type="term" value="P:fatty acid biosynthetic process"/>
    <property type="evidence" value="ECO:0007669"/>
    <property type="project" value="InterPro"/>
</dbReference>
<dbReference type="GO" id="GO:0046189">
    <property type="term" value="P:phenol-containing compound biosynthetic process"/>
    <property type="evidence" value="ECO:0007669"/>
    <property type="project" value="UniProtKB-ARBA"/>
</dbReference>
<dbReference type="GO" id="GO:0030639">
    <property type="term" value="P:polyketide biosynthetic process"/>
    <property type="evidence" value="ECO:0007669"/>
    <property type="project" value="UniProtKB-ARBA"/>
</dbReference>
<dbReference type="GO" id="GO:0009403">
    <property type="term" value="P:toxin biosynthetic process"/>
    <property type="evidence" value="ECO:0007669"/>
    <property type="project" value="UniProtKB-ARBA"/>
</dbReference>
<dbReference type="CDD" id="cd00833">
    <property type="entry name" value="PKS"/>
    <property type="match status" value="1"/>
</dbReference>
<dbReference type="FunFam" id="3.40.366.10:FF:000002">
    <property type="entry name" value="Probable polyketide synthase 2"/>
    <property type="match status" value="1"/>
</dbReference>
<dbReference type="FunFam" id="1.10.1200.10:FF:000011">
    <property type="entry name" value="Sterigmatocystin biosynthesis polyketide synthase"/>
    <property type="match status" value="2"/>
</dbReference>
<dbReference type="FunFam" id="3.10.129.110:FF:000001">
    <property type="entry name" value="Sterigmatocystin biosynthesis polyketide synthase"/>
    <property type="match status" value="1"/>
</dbReference>
<dbReference type="Gene3D" id="3.30.70.3290">
    <property type="match status" value="1"/>
</dbReference>
<dbReference type="Gene3D" id="3.40.47.10">
    <property type="match status" value="1"/>
</dbReference>
<dbReference type="Gene3D" id="1.10.1200.10">
    <property type="entry name" value="ACP-like"/>
    <property type="match status" value="2"/>
</dbReference>
<dbReference type="Gene3D" id="3.40.50.1820">
    <property type="entry name" value="alpha/beta hydrolase"/>
    <property type="match status" value="1"/>
</dbReference>
<dbReference type="Gene3D" id="3.40.366.10">
    <property type="entry name" value="Malonyl-Coenzyme A Acyl Carrier Protein, domain 2"/>
    <property type="match status" value="1"/>
</dbReference>
<dbReference type="Gene3D" id="3.10.129.110">
    <property type="entry name" value="Polyketide synthase dehydratase"/>
    <property type="match status" value="1"/>
</dbReference>
<dbReference type="InterPro" id="IPR029058">
    <property type="entry name" value="AB_hydrolase_fold"/>
</dbReference>
<dbReference type="InterPro" id="IPR001227">
    <property type="entry name" value="Ac_transferase_dom_sf"/>
</dbReference>
<dbReference type="InterPro" id="IPR036736">
    <property type="entry name" value="ACP-like_sf"/>
</dbReference>
<dbReference type="InterPro" id="IPR014043">
    <property type="entry name" value="Acyl_transferase_dom"/>
</dbReference>
<dbReference type="InterPro" id="IPR016035">
    <property type="entry name" value="Acyl_Trfase/lysoPLipase"/>
</dbReference>
<dbReference type="InterPro" id="IPR018201">
    <property type="entry name" value="Ketoacyl_synth_AS"/>
</dbReference>
<dbReference type="InterPro" id="IPR014031">
    <property type="entry name" value="Ketoacyl_synth_C"/>
</dbReference>
<dbReference type="InterPro" id="IPR014030">
    <property type="entry name" value="Ketoacyl_synth_N"/>
</dbReference>
<dbReference type="InterPro" id="IPR020841">
    <property type="entry name" value="PKS_Beta-ketoAc_synthase_dom"/>
</dbReference>
<dbReference type="InterPro" id="IPR042104">
    <property type="entry name" value="PKS_dehydratase_sf"/>
</dbReference>
<dbReference type="InterPro" id="IPR049551">
    <property type="entry name" value="PKS_DH_C"/>
</dbReference>
<dbReference type="InterPro" id="IPR049900">
    <property type="entry name" value="PKS_mFAS_DH"/>
</dbReference>
<dbReference type="InterPro" id="IPR050091">
    <property type="entry name" value="PKS_NRPS_Biosynth_Enz"/>
</dbReference>
<dbReference type="InterPro" id="IPR020806">
    <property type="entry name" value="PKS_PP-bd"/>
</dbReference>
<dbReference type="InterPro" id="IPR009081">
    <property type="entry name" value="PP-bd_ACP"/>
</dbReference>
<dbReference type="InterPro" id="IPR006162">
    <property type="entry name" value="Ppantetheine_attach_site"/>
</dbReference>
<dbReference type="InterPro" id="IPR030918">
    <property type="entry name" value="PT_fungal_PKS"/>
</dbReference>
<dbReference type="InterPro" id="IPR001031">
    <property type="entry name" value="Thioesterase"/>
</dbReference>
<dbReference type="InterPro" id="IPR016039">
    <property type="entry name" value="Thiolase-like"/>
</dbReference>
<dbReference type="NCBIfam" id="TIGR04532">
    <property type="entry name" value="PT_fungal_PKS"/>
    <property type="match status" value="1"/>
</dbReference>
<dbReference type="PANTHER" id="PTHR43775:SF45">
    <property type="entry name" value="CONIDIAL PIGMENT POLYKETIDE SYNTHASE ALB1"/>
    <property type="match status" value="1"/>
</dbReference>
<dbReference type="PANTHER" id="PTHR43775">
    <property type="entry name" value="FATTY ACID SYNTHASE"/>
    <property type="match status" value="1"/>
</dbReference>
<dbReference type="Pfam" id="PF00698">
    <property type="entry name" value="Acyl_transf_1"/>
    <property type="match status" value="1"/>
</dbReference>
<dbReference type="Pfam" id="PF22621">
    <property type="entry name" value="CurL-like_PKS_C"/>
    <property type="match status" value="1"/>
</dbReference>
<dbReference type="Pfam" id="PF00109">
    <property type="entry name" value="ketoacyl-synt"/>
    <property type="match status" value="1"/>
</dbReference>
<dbReference type="Pfam" id="PF02801">
    <property type="entry name" value="Ketoacyl-synt_C"/>
    <property type="match status" value="1"/>
</dbReference>
<dbReference type="Pfam" id="PF00550">
    <property type="entry name" value="PP-binding"/>
    <property type="match status" value="2"/>
</dbReference>
<dbReference type="Pfam" id="PF14765">
    <property type="entry name" value="PS-DH"/>
    <property type="match status" value="1"/>
</dbReference>
<dbReference type="Pfam" id="PF00975">
    <property type="entry name" value="Thioesterase"/>
    <property type="match status" value="1"/>
</dbReference>
<dbReference type="SMART" id="SM00827">
    <property type="entry name" value="PKS_AT"/>
    <property type="match status" value="1"/>
</dbReference>
<dbReference type="SMART" id="SM00825">
    <property type="entry name" value="PKS_KS"/>
    <property type="match status" value="1"/>
</dbReference>
<dbReference type="SMART" id="SM00823">
    <property type="entry name" value="PKS_PP"/>
    <property type="match status" value="2"/>
</dbReference>
<dbReference type="SUPFAM" id="SSF47336">
    <property type="entry name" value="ACP-like"/>
    <property type="match status" value="2"/>
</dbReference>
<dbReference type="SUPFAM" id="SSF53474">
    <property type="entry name" value="alpha/beta-Hydrolases"/>
    <property type="match status" value="1"/>
</dbReference>
<dbReference type="SUPFAM" id="SSF52151">
    <property type="entry name" value="FabD/lysophospholipase-like"/>
    <property type="match status" value="1"/>
</dbReference>
<dbReference type="SUPFAM" id="SSF53901">
    <property type="entry name" value="Thiolase-like"/>
    <property type="match status" value="1"/>
</dbReference>
<dbReference type="PROSITE" id="PS50075">
    <property type="entry name" value="CARRIER"/>
    <property type="match status" value="2"/>
</dbReference>
<dbReference type="PROSITE" id="PS00606">
    <property type="entry name" value="KS3_1"/>
    <property type="match status" value="1"/>
</dbReference>
<dbReference type="PROSITE" id="PS52004">
    <property type="entry name" value="KS3_2"/>
    <property type="match status" value="1"/>
</dbReference>
<dbReference type="PROSITE" id="PS00012">
    <property type="entry name" value="PHOSPHOPANTETHEINE"/>
    <property type="match status" value="2"/>
</dbReference>
<dbReference type="PROSITE" id="PS52019">
    <property type="entry name" value="PKS_MFAS_DH"/>
    <property type="match status" value="1"/>
</dbReference>
<sequence length="1861" mass="202972">MPKLSQQAPLVSSGSGVIASQTFADLIRAALRDILLHRLDLPALVGHLTGIFGLSSNESFVITPVSTNVATGLVAATAKAVGKTGSVDNEIMEAVALAGSRGTSARTHDSKIAIIGMSGRFPEAADLDSFWSLLVQGVDAYRPVAPDRFDAHAHYDETGRRKNTSKVLGGCWINQPGLFDPKFFSISPKEAEQSDPAQRLALQTAYEALEMAGMVPDRTQSTQRERVGVFYGMFTQGGIRAFTPGRINYHFKFSGPSITVDTACSSSLAAIHVACNSLWRGDCDTAVAGGVNVLTNPDIFAGLDRGHFLSTTGNCKTFDDDADGYCRADGVGTVILKRLEDAIMDKDPILAVLNSAYTNHSAEAVSITRPHAGAQELIFSKLLRETGIHPHDVSYIEMHGTGTQAGDATEMSSVLRTFAPDTGRLSNQTLHLGSAKSNVGHGESASGVTSLIKVLLMMKHNTIPPHCGIKGRINHRFPTDLRERNVFIASQPVAWDKPHSGSGKRRVFINNFSAAGGNSALLLEDAPTRQHPETKDPRSTHIVAVSAKSSTALVNNLKRLKVFVQDNIHNLDLLAKLSYTTTARRIHYPFRAAITASSSDQLLQGIESILLRDESTKPATSQKNIGFVFSGQGAQYAGMGRHLFQNNETFRTQVLACNQICLSQGFPSILDIFNQGVEMNNLEPLVVQLGTTCLQMSLVSFWKSLGVTPDFCIGHSLGEYAALQAAGVLSVSDTIYLTGIRARLLQKKCSAGSHAMLAVRAPLAQVHGFFNPSIHEVTCLNSPHDVAIGGLVADIEDLERELAENNIEAVKVSVPFAFHSTQVEPILDEFCAAAESVQFQTQRIPVISTLLGEVVLPEAKAVFGPEYLKRHCREPVNFTAAAQAGKDANIINSASVFIEIGPHTVCSALLKSNIGPNAVTLPSLHRKDDGWKVLADTLAGLYHSGLRINWDEFHRDFESCQEVLQLPSYCWDNKNYWIQYVHNWTLTKGDPPATTAQTPALELPENSTSSVQKVIQQTDGPGPFVTIVVQSDFGSPRLAEVAEGHKVNGEMLCTSSLYAEIGMTLGRQLLEKYRPDLQGYSTEIEDMSVDKPLILKEKNKETLFRAEVVHDKSTLTAAMSIYSVDSAGKKTVDHAHCILRFADPKSWLDEWERTYYSIERSVRWLEARVEQGTDSLLSKGIVYKLFSSLVDYSPSFKGLQEVILNSSDREATAKVRLQAEKEDFDYNPMWIDSFGQLTGFLMNGHDFTEKDQVFINHGWRSMRCAKQFRKDAVYRTYICMQNVDKTKYCGDLYIIEDGVIIAVFGGMTVLPPRRGADAIHTPNPVAAAPAGLVASTKAHVRRPLDIPTRAQRQASSPQSGAIHRILVILAEEVGLSLETLTDDLVFADYGVDSLLSLTITGRIREELDLDVDSSTFTNCSTLGELRLFLAADQKLDDAVACESSNGQHTPQTSDKGSGTLTAQKPDHDTDSEMTLNRVCAIIAEEVGISVEELSSSQDFQELGIDSLSALTILSRVREELQLDLESDFFDTHPSFYSLQKTLRGTEGASNRTLEPNGAIPSRHDLKSDLGNIEWQSGQNIVASAPHATSILVSGSPSTARMILVLFPDGSGSAASYGALAPKIRKDIAVYALNCPWRTNGEEILRLGVSLDQMVAKHLIEVRRILDNHQQSRLNGSIDLALGGWSAGGILAIEGVRQLRQTGIVVQKLVLLDAPNPIGLQNPPPRMFHFLDELGILGAGTGKAPTWVLQHFDAMVNLLKSYRPRPLSAESAPKSLIVYAKDGVCKDPKGPQMDTKPDDAREMLWLLYDRVDFSAEGWKSLVGQQNLVVGVVEDVNHFSMMNPGPKIIEMSNLIGDFLLGLN</sequence>
<accession>E9EHG2</accession>
<feature type="chain" id="PRO_0000445748" description="Polyketide synthase 2">
    <location>
        <begin position="1"/>
        <end position="1861"/>
    </location>
</feature>
<feature type="domain" description="Ketosynthase family 3 (KS3)" evidence="4 10">
    <location>
        <begin position="109"/>
        <end position="525"/>
    </location>
</feature>
<feature type="domain" description="PKS/mFAS DH" evidence="5">
    <location>
        <begin position="1012"/>
        <end position="1318"/>
    </location>
</feature>
<feature type="domain" description="Carrier 1" evidence="3 10">
    <location>
        <begin position="1356"/>
        <end position="1433"/>
    </location>
</feature>
<feature type="domain" description="Carrier 2" evidence="3 10">
    <location>
        <begin position="1472"/>
        <end position="1546"/>
    </location>
</feature>
<feature type="region of interest" description="Malonyl-CoA:ACP transacylase (MAT) domain" evidence="2 10">
    <location>
        <begin position="626"/>
        <end position="931"/>
    </location>
</feature>
<feature type="region of interest" description="Product template (PT) domain" evidence="2 10">
    <location>
        <begin position="1008"/>
        <end position="1312"/>
    </location>
</feature>
<feature type="region of interest" description="N-terminal hotdog fold" evidence="5">
    <location>
        <begin position="1012"/>
        <end position="1146"/>
    </location>
</feature>
<feature type="region of interest" description="C-terminal hotdog fold" evidence="5">
    <location>
        <begin position="1174"/>
        <end position="1318"/>
    </location>
</feature>
<feature type="region of interest" description="Disordered" evidence="7">
    <location>
        <begin position="1441"/>
        <end position="1470"/>
    </location>
</feature>
<feature type="region of interest" description="Thioesterase (TE) domain" evidence="2 10">
    <location>
        <begin position="1582"/>
        <end position="1855"/>
    </location>
</feature>
<feature type="compositionally biased region" description="Polar residues" evidence="7">
    <location>
        <begin position="1442"/>
        <end position="1462"/>
    </location>
</feature>
<feature type="active site" description="For beta-ketoacyl synthase activity" evidence="4">
    <location>
        <position position="264"/>
    </location>
</feature>
<feature type="active site" description="For beta-ketoacyl synthase activity" evidence="4">
    <location>
        <position position="399"/>
    </location>
</feature>
<feature type="active site" description="For beta-ketoacyl synthase activity" evidence="4">
    <location>
        <position position="441"/>
    </location>
</feature>
<feature type="active site" description="For acyl/malonyl transferase activity" evidence="6">
    <location>
        <position position="716"/>
    </location>
</feature>
<feature type="active site" description="Proton acceptor; for dehydratase activity" evidence="5">
    <location>
        <position position="1045"/>
    </location>
</feature>
<feature type="active site" description="Proton donor; for dehydratase activity" evidence="5">
    <location>
        <position position="1232"/>
    </location>
</feature>
<feature type="active site" description="For thioesterase activity" evidence="1">
    <location>
        <position position="1685"/>
    </location>
</feature>
<feature type="modified residue" description="O-(pantetheine 4'-phosphoryl)serine" evidence="3">
    <location>
        <position position="1393"/>
    </location>
</feature>
<feature type="modified residue" description="O-(pantetheine 4'-phosphoryl)serine" evidence="3">
    <location>
        <position position="1506"/>
    </location>
</feature>
<gene>
    <name evidence="9" type="primary">Pks2</name>
    <name type="ORF">MAC_09310</name>
</gene>
<comment type="function">
    <text evidence="10">Polyketide synthase; part of the Pks2 gene cluster that mediates the formation of infectious structures (appressoria), enabling these fungi to kill insects faster (Probable). The product of the Pks2 gene cluster is different from the one of Pks1 and has still not been identified (Probable).</text>
</comment>
<comment type="induction">
    <text evidence="8">Expression is up-regulated in appressoria-forming germlings on locust cuticle (PubMed:29958281). Expression is also up-regulated during conidiation (PubMed:29958281).</text>
</comment>
<comment type="domain">
    <text evidence="10">Multidomain protein; including a ketosynthase (KS) that catalyzes repeated decarboxylative condensation to elongate the polyketide backbone; a malonyl-CoA:ACP transacylase (MAT) that selects and transfers the extender unit malonyl-CoA; a product template (PT) domain that controls the immediate cyclization regioselectivity of the reactive polyketide backbone; and an acyl-carrier protein (ACP) that serves as the tether of the growing and completed polyketide via its phosphopantetheinyl arm. Lacks the starter unit:ACP transacylase (SAT) that selects the starter unit.</text>
</comment>
<comment type="domain">
    <text evidence="10">The release of the polyketide chain from the non-reducing polyketide synthase is mediated by the thioesterase (TE) domain localized at the C-ter of the protein.</text>
</comment>
<evidence type="ECO:0000250" key="1">
    <source>
        <dbReference type="UniProtKB" id="Q03149"/>
    </source>
</evidence>
<evidence type="ECO:0000255" key="2"/>
<evidence type="ECO:0000255" key="3">
    <source>
        <dbReference type="PROSITE-ProRule" id="PRU00258"/>
    </source>
</evidence>
<evidence type="ECO:0000255" key="4">
    <source>
        <dbReference type="PROSITE-ProRule" id="PRU01348"/>
    </source>
</evidence>
<evidence type="ECO:0000255" key="5">
    <source>
        <dbReference type="PROSITE-ProRule" id="PRU01363"/>
    </source>
</evidence>
<evidence type="ECO:0000255" key="6">
    <source>
        <dbReference type="PROSITE-ProRule" id="PRU10022"/>
    </source>
</evidence>
<evidence type="ECO:0000256" key="7">
    <source>
        <dbReference type="SAM" id="MobiDB-lite"/>
    </source>
</evidence>
<evidence type="ECO:0000269" key="8">
    <source>
    </source>
</evidence>
<evidence type="ECO:0000303" key="9">
    <source>
    </source>
</evidence>
<evidence type="ECO:0000305" key="10">
    <source>
    </source>
</evidence>
<keyword id="KW-0511">Multifunctional enzyme</keyword>
<keyword id="KW-0596">Phosphopantetheine</keyword>
<keyword id="KW-0597">Phosphoprotein</keyword>
<keyword id="KW-1185">Reference proteome</keyword>
<keyword id="KW-0677">Repeat</keyword>
<keyword id="KW-0808">Transferase</keyword>
<organism>
    <name type="scientific">Metarhizium acridum (strain CQMa 102)</name>
    <dbReference type="NCBI Taxonomy" id="655827"/>
    <lineage>
        <taxon>Eukaryota</taxon>
        <taxon>Fungi</taxon>
        <taxon>Dikarya</taxon>
        <taxon>Ascomycota</taxon>
        <taxon>Pezizomycotina</taxon>
        <taxon>Sordariomycetes</taxon>
        <taxon>Hypocreomycetidae</taxon>
        <taxon>Hypocreales</taxon>
        <taxon>Clavicipitaceae</taxon>
        <taxon>Metarhizium</taxon>
    </lineage>
</organism>
<proteinExistence type="evidence at transcript level"/>
<name>PKS2_METAQ</name>
<protein>
    <recommendedName>
        <fullName evidence="9">Polyketide synthase 2</fullName>
        <ecNumber evidence="10">2.3.1.-</ecNumber>
    </recommendedName>
</protein>
<reference key="1">
    <citation type="journal article" date="2011" name="PLoS Genet.">
        <title>Genome sequencing and comparative transcriptomics of the model entomopathogenic fungi Metarhizium anisopliae and M. acridum.</title>
        <authorList>
            <person name="Gao Q."/>
            <person name="Jin K."/>
            <person name="Ying S.-H."/>
            <person name="Zhang Y."/>
            <person name="Xiao G."/>
            <person name="Shang Y."/>
            <person name="Duan Z."/>
            <person name="Hu X."/>
            <person name="Xie X.-Q."/>
            <person name="Zhou G."/>
            <person name="Peng G."/>
            <person name="Luo Z."/>
            <person name="Huang W."/>
            <person name="Wang B."/>
            <person name="Fang W."/>
            <person name="Wang S."/>
            <person name="Zhong Y."/>
            <person name="Ma L.-J."/>
            <person name="St Leger R.J."/>
            <person name="Zhao G.-P."/>
            <person name="Pei Y."/>
            <person name="Feng M.-G."/>
            <person name="Xia Y."/>
            <person name="Wang C."/>
        </authorList>
    </citation>
    <scope>NUCLEOTIDE SEQUENCE [LARGE SCALE GENOMIC DNA]</scope>
    <source>
        <strain>CQMa 102</strain>
    </source>
</reference>
<reference key="2">
    <citation type="journal article" date="2018" name="PLoS Genet.">
        <title>Duplication of a Pks gene cluster and subsequent functional diversification facilitate environmental adaptation in Metarhizium species.</title>
        <authorList>
            <person name="Zeng G."/>
            <person name="Zhang P."/>
            <person name="Zhang Q."/>
            <person name="Zhao H."/>
            <person name="Li Z."/>
            <person name="Zhang X."/>
            <person name="Wang C."/>
            <person name="Yin W.B."/>
            <person name="Fang W."/>
        </authorList>
    </citation>
    <scope>IDENTIFICATION</scope>
    <scope>FUNCTION</scope>
    <scope>INDUCTION</scope>
    <scope>DOMAIN</scope>
</reference>